<reference key="1">
    <citation type="journal article" date="1999" name="Mol. Biol. Evol.">
        <title>Complete sequence, gene arrangement, and genetic code of mitochondrial DNA of the cephalochordate Branchiostoma floridae (Amphioxus).</title>
        <authorList>
            <person name="Boore J.L."/>
            <person name="Daehler L.L."/>
            <person name="Brown W.M."/>
        </authorList>
    </citation>
    <scope>NUCLEOTIDE SEQUENCE [LARGE SCALE GENOMIC DNA]</scope>
    <source>
        <strain evidence="4">S238N-H82</strain>
    </source>
</reference>
<proteinExistence type="inferred from homology"/>
<dbReference type="EC" id="7.1.1.2"/>
<dbReference type="EMBL" id="AF098298">
    <property type="protein sequence ID" value="AAB87999.1"/>
    <property type="molecule type" value="Genomic_DNA"/>
</dbReference>
<dbReference type="RefSeq" id="NP_007765.1">
    <property type="nucleotide sequence ID" value="NC_000834.1"/>
</dbReference>
<dbReference type="SMR" id="O47430"/>
<dbReference type="FunCoup" id="O47430">
    <property type="interactions" value="11"/>
</dbReference>
<dbReference type="STRING" id="7739.O47430"/>
<dbReference type="GeneID" id="808734"/>
<dbReference type="KEGG" id="bfo:808734"/>
<dbReference type="CTD" id="4540"/>
<dbReference type="InParanoid" id="O47430"/>
<dbReference type="OMA" id="GVGIMSF"/>
<dbReference type="OrthoDB" id="10069788at2759"/>
<dbReference type="Proteomes" id="UP000001554">
    <property type="component" value="Mitochondrion MT"/>
</dbReference>
<dbReference type="GO" id="GO:0005743">
    <property type="term" value="C:mitochondrial inner membrane"/>
    <property type="evidence" value="ECO:0007669"/>
    <property type="project" value="UniProtKB-SubCell"/>
</dbReference>
<dbReference type="GO" id="GO:0045271">
    <property type="term" value="C:respiratory chain complex I"/>
    <property type="evidence" value="ECO:0000318"/>
    <property type="project" value="GO_Central"/>
</dbReference>
<dbReference type="GO" id="GO:0008137">
    <property type="term" value="F:NADH dehydrogenase (ubiquinone) activity"/>
    <property type="evidence" value="ECO:0007669"/>
    <property type="project" value="UniProtKB-EC"/>
</dbReference>
<dbReference type="GO" id="GO:0042773">
    <property type="term" value="P:ATP synthesis coupled electron transport"/>
    <property type="evidence" value="ECO:0007669"/>
    <property type="project" value="InterPro"/>
</dbReference>
<dbReference type="GO" id="GO:0015990">
    <property type="term" value="P:electron transport coupled proton transport"/>
    <property type="evidence" value="ECO:0000318"/>
    <property type="project" value="GO_Central"/>
</dbReference>
<dbReference type="InterPro" id="IPR010934">
    <property type="entry name" value="NADH_DH_su5_C"/>
</dbReference>
<dbReference type="InterPro" id="IPR001750">
    <property type="entry name" value="ND/Mrp_TM"/>
</dbReference>
<dbReference type="InterPro" id="IPR003945">
    <property type="entry name" value="NU5C-like"/>
</dbReference>
<dbReference type="InterPro" id="IPR001516">
    <property type="entry name" value="Proton_antipo_N"/>
</dbReference>
<dbReference type="PANTHER" id="PTHR42829">
    <property type="entry name" value="NADH-UBIQUINONE OXIDOREDUCTASE CHAIN 5"/>
    <property type="match status" value="1"/>
</dbReference>
<dbReference type="PANTHER" id="PTHR42829:SF2">
    <property type="entry name" value="NADH-UBIQUINONE OXIDOREDUCTASE CHAIN 5"/>
    <property type="match status" value="1"/>
</dbReference>
<dbReference type="Pfam" id="PF06455">
    <property type="entry name" value="NADH5_C"/>
    <property type="match status" value="1"/>
</dbReference>
<dbReference type="Pfam" id="PF00361">
    <property type="entry name" value="Proton_antipo_M"/>
    <property type="match status" value="1"/>
</dbReference>
<dbReference type="Pfam" id="PF00662">
    <property type="entry name" value="Proton_antipo_N"/>
    <property type="match status" value="1"/>
</dbReference>
<dbReference type="PRINTS" id="PR01434">
    <property type="entry name" value="NADHDHGNASE5"/>
</dbReference>
<comment type="function">
    <text evidence="1">Core subunit of the mitochondrial membrane respiratory chain NADH dehydrogenase (Complex I) that is believed to belong to the minimal assembly required for catalysis. Complex I functions in the transfer of electrons from NADH to the respiratory chain. The immediate electron acceptor for the enzyme is believed to be ubiquinone (By similarity).</text>
</comment>
<comment type="catalytic activity">
    <reaction>
        <text>a ubiquinone + NADH + 5 H(+)(in) = a ubiquinol + NAD(+) + 4 H(+)(out)</text>
        <dbReference type="Rhea" id="RHEA:29091"/>
        <dbReference type="Rhea" id="RHEA-COMP:9565"/>
        <dbReference type="Rhea" id="RHEA-COMP:9566"/>
        <dbReference type="ChEBI" id="CHEBI:15378"/>
        <dbReference type="ChEBI" id="CHEBI:16389"/>
        <dbReference type="ChEBI" id="CHEBI:17976"/>
        <dbReference type="ChEBI" id="CHEBI:57540"/>
        <dbReference type="ChEBI" id="CHEBI:57945"/>
        <dbReference type="EC" id="7.1.1.2"/>
    </reaction>
</comment>
<comment type="subcellular location">
    <subcellularLocation>
        <location evidence="1">Mitochondrion inner membrane</location>
        <topology evidence="1">Multi-pass membrane protein</topology>
    </subcellularLocation>
</comment>
<comment type="similarity">
    <text evidence="3">Belongs to the complex I subunit 5 family.</text>
</comment>
<keyword id="KW-0249">Electron transport</keyword>
<keyword id="KW-0472">Membrane</keyword>
<keyword id="KW-0496">Mitochondrion</keyword>
<keyword id="KW-0999">Mitochondrion inner membrane</keyword>
<keyword id="KW-0520">NAD</keyword>
<keyword id="KW-1185">Reference proteome</keyword>
<keyword id="KW-0679">Respiratory chain</keyword>
<keyword id="KW-1278">Translocase</keyword>
<keyword id="KW-0812">Transmembrane</keyword>
<keyword id="KW-1133">Transmembrane helix</keyword>
<keyword id="KW-0813">Transport</keyword>
<keyword id="KW-0830">Ubiquinone</keyword>
<protein>
    <recommendedName>
        <fullName>NADH-ubiquinone oxidoreductase chain 5</fullName>
        <ecNumber>7.1.1.2</ecNumber>
    </recommendedName>
    <alternativeName>
        <fullName>NADH dehydrogenase subunit 5</fullName>
    </alternativeName>
</protein>
<feature type="chain" id="PRO_0000118069" description="NADH-ubiquinone oxidoreductase chain 5">
    <location>
        <begin position="1"/>
        <end position="599"/>
    </location>
</feature>
<feature type="transmembrane region" description="Helical" evidence="2">
    <location>
        <begin position="1"/>
        <end position="21"/>
    </location>
</feature>
<feature type="transmembrane region" description="Helical" evidence="2">
    <location>
        <begin position="28"/>
        <end position="48"/>
    </location>
</feature>
<feature type="transmembrane region" description="Helical" evidence="2">
    <location>
        <begin position="81"/>
        <end position="101"/>
    </location>
</feature>
<feature type="transmembrane region" description="Helical" evidence="2">
    <location>
        <begin position="115"/>
        <end position="135"/>
    </location>
</feature>
<feature type="transmembrane region" description="Helical" evidence="2">
    <location>
        <begin position="171"/>
        <end position="191"/>
    </location>
</feature>
<feature type="transmembrane region" description="Helical" evidence="2">
    <location>
        <begin position="193"/>
        <end position="213"/>
    </location>
</feature>
<feature type="transmembrane region" description="Helical" evidence="2">
    <location>
        <begin position="233"/>
        <end position="253"/>
    </location>
</feature>
<feature type="transmembrane region" description="Helical" evidence="2">
    <location>
        <begin position="265"/>
        <end position="285"/>
    </location>
</feature>
<feature type="transmembrane region" description="Helical" evidence="2">
    <location>
        <begin position="302"/>
        <end position="322"/>
    </location>
</feature>
<feature type="transmembrane region" description="Helical" evidence="2">
    <location>
        <begin position="323"/>
        <end position="343"/>
    </location>
</feature>
<feature type="transmembrane region" description="Helical" evidence="2">
    <location>
        <begin position="363"/>
        <end position="383"/>
    </location>
</feature>
<feature type="transmembrane region" description="Helical" evidence="2">
    <location>
        <begin position="398"/>
        <end position="420"/>
    </location>
</feature>
<feature type="transmembrane region" description="Helical" evidence="2">
    <location>
        <begin position="455"/>
        <end position="475"/>
    </location>
</feature>
<feature type="transmembrane region" description="Helical" evidence="2">
    <location>
        <begin position="481"/>
        <end position="501"/>
    </location>
</feature>
<feature type="transmembrane region" description="Helical" evidence="2">
    <location>
        <begin position="510"/>
        <end position="530"/>
    </location>
</feature>
<feature type="transmembrane region" description="Helical" evidence="2">
    <location>
        <begin position="577"/>
        <end position="597"/>
    </location>
</feature>
<accession>O47430</accession>
<gene>
    <name type="primary">ND5</name>
    <name type="synonym">NAD5</name>
    <name type="synonym">NADH5</name>
</gene>
<organism>
    <name type="scientific">Branchiostoma floridae</name>
    <name type="common">Florida lancelet</name>
    <name type="synonym">Amphioxus</name>
    <dbReference type="NCBI Taxonomy" id="7739"/>
    <lineage>
        <taxon>Eukaryota</taxon>
        <taxon>Metazoa</taxon>
        <taxon>Chordata</taxon>
        <taxon>Cephalochordata</taxon>
        <taxon>Leptocardii</taxon>
        <taxon>Amphioxiformes</taxon>
        <taxon>Branchiostomatidae</taxon>
        <taxon>Branchiostoma</taxon>
    </lineage>
</organism>
<evidence type="ECO:0000250" key="1"/>
<evidence type="ECO:0000255" key="2"/>
<evidence type="ECO:0000305" key="3"/>
<evidence type="ECO:0000312" key="4">
    <source>
        <dbReference type="Proteomes" id="UP000001554"/>
    </source>
</evidence>
<sequence length="599" mass="66141">MLELWGVLSLTSLGVMVIFLFSKIKSSFAESVKYAGYMNAVLLSILLMSDESEMLFLKWEWVKLGGYSLMISFRFDLYTCCFFVVGLYVTWNILMFSFYYMSTDPRIDLFCKYLGLFLIAMLLLVSAESLFQLLIGWEGVGIMSYLLISWWYARSDANTAALQAIFYNRVGDIGLLIMLMWSLVTLGDWSFTGLYALDFVNTFFLLGVVLAAAGKSAQLGLHPWLPAAMEGPTPVSSLLHSSTMVVAGVFLLIRFSPIILNHKEIQLMVFFLGTMTTLFSAICALAQNDMKKVVAFSTASQLGLMVTVVAGAGAPQLAFLHICMHAFFKAMLFMCSGGFIHGLQNEQDVRKMGGLHSAAPITSVCFFIGSAALMGVPFLAGFFSKDPIIEIININNLNSWAVGLVLIATSFTAAYSVRLLYFSVGGVSRMLVLQPMNEEYGNLIGPLQRLAYSSVIAGVVFIYFLSPNQISCLSLPLSLKLAAVFVTLVGGLIAWDVVNLLHREESVTNIPELAFEAQVGFYPLIMHKLIPKVWLNMGEMYQMQVMDRGWTELALPQGLGGNYKIMADNVVNAQTSLIKMYIAVMVMMGGLILGIMICL</sequence>
<name>NU5M_BRAFL</name>
<geneLocation type="mitochondrion"/>